<dbReference type="EC" id="4.1.1.48" evidence="1"/>
<dbReference type="EMBL" id="CP000673">
    <property type="protein sequence ID" value="EDK33319.1"/>
    <property type="molecule type" value="Genomic_DNA"/>
</dbReference>
<dbReference type="RefSeq" id="WP_012101664.1">
    <property type="nucleotide sequence ID" value="NC_009706.1"/>
</dbReference>
<dbReference type="SMR" id="A5N7N8"/>
<dbReference type="STRING" id="431943.CKL_1277"/>
<dbReference type="KEGG" id="ckl:CKL_1277"/>
<dbReference type="eggNOG" id="COG0134">
    <property type="taxonomic scope" value="Bacteria"/>
</dbReference>
<dbReference type="HOGENOM" id="CLU_034247_2_0_9"/>
<dbReference type="UniPathway" id="UPA00035">
    <property type="reaction ID" value="UER00043"/>
</dbReference>
<dbReference type="Proteomes" id="UP000002411">
    <property type="component" value="Chromosome"/>
</dbReference>
<dbReference type="GO" id="GO:0004425">
    <property type="term" value="F:indole-3-glycerol-phosphate synthase activity"/>
    <property type="evidence" value="ECO:0007669"/>
    <property type="project" value="UniProtKB-UniRule"/>
</dbReference>
<dbReference type="GO" id="GO:0004640">
    <property type="term" value="F:phosphoribosylanthranilate isomerase activity"/>
    <property type="evidence" value="ECO:0007669"/>
    <property type="project" value="TreeGrafter"/>
</dbReference>
<dbReference type="GO" id="GO:0000162">
    <property type="term" value="P:L-tryptophan biosynthetic process"/>
    <property type="evidence" value="ECO:0007669"/>
    <property type="project" value="UniProtKB-UniRule"/>
</dbReference>
<dbReference type="CDD" id="cd00331">
    <property type="entry name" value="IGPS"/>
    <property type="match status" value="1"/>
</dbReference>
<dbReference type="FunFam" id="3.20.20.70:FF:000024">
    <property type="entry name" value="Indole-3-glycerol phosphate synthase"/>
    <property type="match status" value="1"/>
</dbReference>
<dbReference type="Gene3D" id="3.20.20.70">
    <property type="entry name" value="Aldolase class I"/>
    <property type="match status" value="1"/>
</dbReference>
<dbReference type="HAMAP" id="MF_00134_B">
    <property type="entry name" value="IGPS_B"/>
    <property type="match status" value="1"/>
</dbReference>
<dbReference type="InterPro" id="IPR013785">
    <property type="entry name" value="Aldolase_TIM"/>
</dbReference>
<dbReference type="InterPro" id="IPR045186">
    <property type="entry name" value="Indole-3-glycerol_P_synth"/>
</dbReference>
<dbReference type="InterPro" id="IPR013798">
    <property type="entry name" value="Indole-3-glycerol_P_synth_dom"/>
</dbReference>
<dbReference type="InterPro" id="IPR001468">
    <property type="entry name" value="Indole-3-GlycerolPSynthase_CS"/>
</dbReference>
<dbReference type="InterPro" id="IPR011060">
    <property type="entry name" value="RibuloseP-bd_barrel"/>
</dbReference>
<dbReference type="NCBIfam" id="NF001377">
    <property type="entry name" value="PRK00278.2-4"/>
    <property type="match status" value="1"/>
</dbReference>
<dbReference type="PANTHER" id="PTHR22854:SF2">
    <property type="entry name" value="INDOLE-3-GLYCEROL-PHOSPHATE SYNTHASE"/>
    <property type="match status" value="1"/>
</dbReference>
<dbReference type="PANTHER" id="PTHR22854">
    <property type="entry name" value="TRYPTOPHAN BIOSYNTHESIS PROTEIN"/>
    <property type="match status" value="1"/>
</dbReference>
<dbReference type="Pfam" id="PF00218">
    <property type="entry name" value="IGPS"/>
    <property type="match status" value="1"/>
</dbReference>
<dbReference type="SUPFAM" id="SSF51366">
    <property type="entry name" value="Ribulose-phoshate binding barrel"/>
    <property type="match status" value="1"/>
</dbReference>
<dbReference type="PROSITE" id="PS00614">
    <property type="entry name" value="IGPS"/>
    <property type="match status" value="1"/>
</dbReference>
<protein>
    <recommendedName>
        <fullName evidence="1">Indole-3-glycerol phosphate synthase</fullName>
        <shortName evidence="1">IGPS</shortName>
        <ecNumber evidence="1">4.1.1.48</ecNumber>
    </recommendedName>
</protein>
<proteinExistence type="inferred from homology"/>
<sequence>MILDDIVGVKKKELEIRKESKPLKDIVDELSRIDEFKIRNFKGALINDDISIIGEIKRASPSKGIIDRKFEFEDICSTYETLDIDAVSVLTEQHYFKGKDEYLKKAKEFISKPVLRKDFIVDEYQVYESKLLGADAVLLIVRILKENLDKFYKIASSIGLQCIVEVHNKSELDIALKIEPEIIGINNRNLENFTVDLKNTENLINYMPENTAVISESGIKTSMDFKYIKSLPINGVLIGEGLMKKIYDIESIKKFIDSVKSG</sequence>
<name>TRPC_CLOK5</name>
<organism>
    <name type="scientific">Clostridium kluyveri (strain ATCC 8527 / DSM 555 / NBRC 12016 / NCIMB 10680 / K1)</name>
    <dbReference type="NCBI Taxonomy" id="431943"/>
    <lineage>
        <taxon>Bacteria</taxon>
        <taxon>Bacillati</taxon>
        <taxon>Bacillota</taxon>
        <taxon>Clostridia</taxon>
        <taxon>Eubacteriales</taxon>
        <taxon>Clostridiaceae</taxon>
        <taxon>Clostridium</taxon>
    </lineage>
</organism>
<comment type="catalytic activity">
    <reaction evidence="1">
        <text>1-(2-carboxyphenylamino)-1-deoxy-D-ribulose 5-phosphate + H(+) = (1S,2R)-1-C-(indol-3-yl)glycerol 3-phosphate + CO2 + H2O</text>
        <dbReference type="Rhea" id="RHEA:23476"/>
        <dbReference type="ChEBI" id="CHEBI:15377"/>
        <dbReference type="ChEBI" id="CHEBI:15378"/>
        <dbReference type="ChEBI" id="CHEBI:16526"/>
        <dbReference type="ChEBI" id="CHEBI:58613"/>
        <dbReference type="ChEBI" id="CHEBI:58866"/>
        <dbReference type="EC" id="4.1.1.48"/>
    </reaction>
</comment>
<comment type="pathway">
    <text evidence="1">Amino-acid biosynthesis; L-tryptophan biosynthesis; L-tryptophan from chorismate: step 4/5.</text>
</comment>
<comment type="similarity">
    <text evidence="1">Belongs to the TrpC family.</text>
</comment>
<feature type="chain" id="PRO_1000095861" description="Indole-3-glycerol phosphate synthase">
    <location>
        <begin position="1"/>
        <end position="262"/>
    </location>
</feature>
<accession>A5N7N8</accession>
<keyword id="KW-0028">Amino-acid biosynthesis</keyword>
<keyword id="KW-0057">Aromatic amino acid biosynthesis</keyword>
<keyword id="KW-0210">Decarboxylase</keyword>
<keyword id="KW-0456">Lyase</keyword>
<keyword id="KW-1185">Reference proteome</keyword>
<keyword id="KW-0822">Tryptophan biosynthesis</keyword>
<gene>
    <name evidence="1" type="primary">trpC</name>
    <name type="ordered locus">CKL_1277</name>
</gene>
<reference key="1">
    <citation type="journal article" date="2008" name="Proc. Natl. Acad. Sci. U.S.A.">
        <title>The genome of Clostridium kluyveri, a strict anaerobe with unique metabolic features.</title>
        <authorList>
            <person name="Seedorf H."/>
            <person name="Fricke W.F."/>
            <person name="Veith B."/>
            <person name="Brueggemann H."/>
            <person name="Liesegang H."/>
            <person name="Strittmatter A."/>
            <person name="Miethke M."/>
            <person name="Buckel W."/>
            <person name="Hinderberger J."/>
            <person name="Li F."/>
            <person name="Hagemeier C."/>
            <person name="Thauer R.K."/>
            <person name="Gottschalk G."/>
        </authorList>
    </citation>
    <scope>NUCLEOTIDE SEQUENCE [LARGE SCALE GENOMIC DNA]</scope>
    <source>
        <strain>ATCC 8527 / DSM 555 / NBRC 12016 / NCIMB 10680 / K1</strain>
    </source>
</reference>
<evidence type="ECO:0000255" key="1">
    <source>
        <dbReference type="HAMAP-Rule" id="MF_00134"/>
    </source>
</evidence>